<gene>
    <name type="primary">glnBB</name>
    <name type="synonym">nifI2</name>
    <name type="ordered locus">MTBMA_c01480</name>
</gene>
<keyword id="KW-0535">Nitrogen fixation</keyword>
<keyword id="KW-0804">Transcription</keyword>
<keyword id="KW-0805">Transcription regulation</keyword>
<reference key="1">
    <citation type="journal article" date="1995" name="Eur. J. Biochem.">
        <title>The tungsten formylmethanofuran dehydrogenase from Methanobacterium thermoautotrophicum contains sequence motifs characteristic for enzymes containing molybdopterin dinucleotide.</title>
        <authorList>
            <person name="Hochheimer A."/>
            <person name="Schmitz R.A."/>
            <person name="Thauer R.K."/>
            <person name="Hedderich R."/>
        </authorList>
    </citation>
    <scope>NUCLEOTIDE SEQUENCE [GENOMIC DNA]</scope>
    <source>
        <strain>ATCC BAA-927 / DSM 2133 / JCM 14651 / NBRC 100331 / OCM 82 / Marburg</strain>
    </source>
</reference>
<reference key="2">
    <citation type="journal article" date="2010" name="J. Bacteriol.">
        <title>Complete genome sequence of Methanothermobacter marburgensis, a methanoarchaeon model organism.</title>
        <authorList>
            <person name="Liesegang H."/>
            <person name="Kaster A.K."/>
            <person name="Wiezer A."/>
            <person name="Goenrich M."/>
            <person name="Wollherr A."/>
            <person name="Seedorf H."/>
            <person name="Gottschalk G."/>
            <person name="Thauer R.K."/>
        </authorList>
    </citation>
    <scope>NUCLEOTIDE SEQUENCE [LARGE SCALE GENOMIC DNA]</scope>
    <source>
        <strain>ATCC BAA-927 / DSM 2133 / JCM 14651 / NBRC 100331 / OCM 82 / Marburg</strain>
    </source>
</reference>
<name>GLNB2_METTM</name>
<dbReference type="EMBL" id="X87971">
    <property type="protein sequence ID" value="CAA61218.1"/>
    <property type="molecule type" value="Genomic_DNA"/>
</dbReference>
<dbReference type="EMBL" id="CP001710">
    <property type="protein sequence ID" value="ADL57757.1"/>
    <property type="molecule type" value="Genomic_DNA"/>
</dbReference>
<dbReference type="RefSeq" id="WP_013294985.1">
    <property type="nucleotide sequence ID" value="NC_014408.1"/>
</dbReference>
<dbReference type="SMR" id="Q50787"/>
<dbReference type="STRING" id="79929.MTBMA_c01480"/>
<dbReference type="PaxDb" id="79929-MTBMA_c01480"/>
<dbReference type="GeneID" id="43708176"/>
<dbReference type="GeneID" id="9703853"/>
<dbReference type="KEGG" id="mmg:MTBMA_c01480"/>
<dbReference type="PATRIC" id="fig|79929.8.peg.144"/>
<dbReference type="HOGENOM" id="CLU_082268_0_1_2"/>
<dbReference type="OrthoDB" id="10960at2157"/>
<dbReference type="Proteomes" id="UP000000345">
    <property type="component" value="Chromosome"/>
</dbReference>
<dbReference type="GO" id="GO:0005829">
    <property type="term" value="C:cytosol"/>
    <property type="evidence" value="ECO:0007669"/>
    <property type="project" value="TreeGrafter"/>
</dbReference>
<dbReference type="GO" id="GO:0005524">
    <property type="term" value="F:ATP binding"/>
    <property type="evidence" value="ECO:0007669"/>
    <property type="project" value="TreeGrafter"/>
</dbReference>
<dbReference type="GO" id="GO:0030234">
    <property type="term" value="F:enzyme regulator activity"/>
    <property type="evidence" value="ECO:0007669"/>
    <property type="project" value="InterPro"/>
</dbReference>
<dbReference type="GO" id="GO:0009399">
    <property type="term" value="P:nitrogen fixation"/>
    <property type="evidence" value="ECO:0007669"/>
    <property type="project" value="UniProtKB-KW"/>
</dbReference>
<dbReference type="GO" id="GO:0006808">
    <property type="term" value="P:regulation of nitrogen utilization"/>
    <property type="evidence" value="ECO:0007669"/>
    <property type="project" value="InterPro"/>
</dbReference>
<dbReference type="Gene3D" id="3.30.70.120">
    <property type="match status" value="1"/>
</dbReference>
<dbReference type="InterPro" id="IPR002187">
    <property type="entry name" value="N-reg_PII"/>
</dbReference>
<dbReference type="InterPro" id="IPR011322">
    <property type="entry name" value="N-reg_PII-like_a/b"/>
</dbReference>
<dbReference type="InterPro" id="IPR015867">
    <property type="entry name" value="N-reg_PII/ATP_PRibTrfase_C"/>
</dbReference>
<dbReference type="InterPro" id="IPR017918">
    <property type="entry name" value="N-reg_PII_CS"/>
</dbReference>
<dbReference type="PANTHER" id="PTHR30115">
    <property type="entry name" value="NITROGEN REGULATORY PROTEIN P-II"/>
    <property type="match status" value="1"/>
</dbReference>
<dbReference type="PANTHER" id="PTHR30115:SF11">
    <property type="entry name" value="NITROGEN REGULATORY PROTEIN P-II HOMOLOG"/>
    <property type="match status" value="1"/>
</dbReference>
<dbReference type="Pfam" id="PF00543">
    <property type="entry name" value="P-II"/>
    <property type="match status" value="1"/>
</dbReference>
<dbReference type="PRINTS" id="PR00340">
    <property type="entry name" value="PIIGLNB"/>
</dbReference>
<dbReference type="SMART" id="SM00938">
    <property type="entry name" value="P-II"/>
    <property type="match status" value="1"/>
</dbReference>
<dbReference type="SUPFAM" id="SSF54913">
    <property type="entry name" value="GlnB-like"/>
    <property type="match status" value="1"/>
</dbReference>
<dbReference type="PROSITE" id="PS00638">
    <property type="entry name" value="PII_GLNB_CTER"/>
    <property type="match status" value="1"/>
</dbReference>
<dbReference type="PROSITE" id="PS51343">
    <property type="entry name" value="PII_GLNB_DOM"/>
    <property type="match status" value="1"/>
</dbReference>
<feature type="chain" id="PRO_0000139811" description="Nitrogen fixation nifHD region GlnB-like protein 2">
    <location>
        <begin position="1"/>
        <end position="121"/>
    </location>
</feature>
<comment type="function">
    <text>Could be involved in the regulation of nitrogen fixation.</text>
</comment>
<comment type="similarity">
    <text evidence="1">Belongs to the P(II) protein family.</text>
</comment>
<proteinExistence type="inferred from homology"/>
<organism>
    <name type="scientific">Methanothermobacter marburgensis (strain ATCC BAA-927 / DSM 2133 / JCM 14651 / NBRC 100331 / OCM 82 / Marburg)</name>
    <name type="common">Methanobacterium thermoautotrophicum</name>
    <dbReference type="NCBI Taxonomy" id="79929"/>
    <lineage>
        <taxon>Archaea</taxon>
        <taxon>Methanobacteriati</taxon>
        <taxon>Methanobacteriota</taxon>
        <taxon>Methanomada group</taxon>
        <taxon>Methanobacteria</taxon>
        <taxon>Methanobacteriales</taxon>
        <taxon>Methanobacteriaceae</taxon>
        <taxon>Methanothermobacter</taxon>
    </lineage>
</organism>
<accession>Q50787</accession>
<accession>D9PU59</accession>
<sequence>MKEVIAIIRPKNMKKTRDVLESLGFPSFNATRVLGRGKQRAIIDEVTIPSPSPEIDEVRGTMRYIPKRMIQITVEDPDVQLVVEAIMKVNHTGKIGDGKIFVCPVDDAMRIRTGDRGTEAL</sequence>
<protein>
    <recommendedName>
        <fullName>Nitrogen fixation nifHD region GlnB-like protein 2</fullName>
    </recommendedName>
</protein>
<evidence type="ECO:0000255" key="1">
    <source>
        <dbReference type="PROSITE-ProRule" id="PRU00675"/>
    </source>
</evidence>